<evidence type="ECO:0000255" key="1">
    <source>
        <dbReference type="HAMAP-Rule" id="MF_01333"/>
    </source>
</evidence>
<evidence type="ECO:0000305" key="2"/>
<organism>
    <name type="scientific">Brevibacillus brevis (strain 47 / JCM 6285 / NBRC 100599)</name>
    <dbReference type="NCBI Taxonomy" id="358681"/>
    <lineage>
        <taxon>Bacteria</taxon>
        <taxon>Bacillati</taxon>
        <taxon>Bacillota</taxon>
        <taxon>Bacilli</taxon>
        <taxon>Bacillales</taxon>
        <taxon>Paenibacillaceae</taxon>
        <taxon>Brevibacillus</taxon>
    </lineage>
</organism>
<dbReference type="EMBL" id="AP008955">
    <property type="protein sequence ID" value="BAH41210.1"/>
    <property type="molecule type" value="Genomic_DNA"/>
</dbReference>
<dbReference type="RefSeq" id="WP_012683991.1">
    <property type="nucleotide sequence ID" value="NC_012491.1"/>
</dbReference>
<dbReference type="SMR" id="C0ZIJ2"/>
<dbReference type="STRING" id="358681.BBR47_02330"/>
<dbReference type="KEGG" id="bbe:BBR47_02330"/>
<dbReference type="eggNOG" id="COG0094">
    <property type="taxonomic scope" value="Bacteria"/>
</dbReference>
<dbReference type="HOGENOM" id="CLU_061015_2_1_9"/>
<dbReference type="Proteomes" id="UP000001877">
    <property type="component" value="Chromosome"/>
</dbReference>
<dbReference type="GO" id="GO:1990904">
    <property type="term" value="C:ribonucleoprotein complex"/>
    <property type="evidence" value="ECO:0007669"/>
    <property type="project" value="UniProtKB-KW"/>
</dbReference>
<dbReference type="GO" id="GO:0005840">
    <property type="term" value="C:ribosome"/>
    <property type="evidence" value="ECO:0007669"/>
    <property type="project" value="UniProtKB-KW"/>
</dbReference>
<dbReference type="GO" id="GO:0019843">
    <property type="term" value="F:rRNA binding"/>
    <property type="evidence" value="ECO:0007669"/>
    <property type="project" value="UniProtKB-UniRule"/>
</dbReference>
<dbReference type="GO" id="GO:0003735">
    <property type="term" value="F:structural constituent of ribosome"/>
    <property type="evidence" value="ECO:0007669"/>
    <property type="project" value="InterPro"/>
</dbReference>
<dbReference type="GO" id="GO:0000049">
    <property type="term" value="F:tRNA binding"/>
    <property type="evidence" value="ECO:0007669"/>
    <property type="project" value="UniProtKB-UniRule"/>
</dbReference>
<dbReference type="GO" id="GO:0006412">
    <property type="term" value="P:translation"/>
    <property type="evidence" value="ECO:0007669"/>
    <property type="project" value="UniProtKB-UniRule"/>
</dbReference>
<dbReference type="FunFam" id="3.30.1440.10:FF:000001">
    <property type="entry name" value="50S ribosomal protein L5"/>
    <property type="match status" value="1"/>
</dbReference>
<dbReference type="Gene3D" id="3.30.1440.10">
    <property type="match status" value="1"/>
</dbReference>
<dbReference type="HAMAP" id="MF_01333_B">
    <property type="entry name" value="Ribosomal_uL5_B"/>
    <property type="match status" value="1"/>
</dbReference>
<dbReference type="InterPro" id="IPR002132">
    <property type="entry name" value="Ribosomal_uL5"/>
</dbReference>
<dbReference type="InterPro" id="IPR020930">
    <property type="entry name" value="Ribosomal_uL5_bac-type"/>
</dbReference>
<dbReference type="InterPro" id="IPR031309">
    <property type="entry name" value="Ribosomal_uL5_C"/>
</dbReference>
<dbReference type="InterPro" id="IPR020929">
    <property type="entry name" value="Ribosomal_uL5_CS"/>
</dbReference>
<dbReference type="InterPro" id="IPR022803">
    <property type="entry name" value="Ribosomal_uL5_dom_sf"/>
</dbReference>
<dbReference type="InterPro" id="IPR031310">
    <property type="entry name" value="Ribosomal_uL5_N"/>
</dbReference>
<dbReference type="NCBIfam" id="NF000585">
    <property type="entry name" value="PRK00010.1"/>
    <property type="match status" value="1"/>
</dbReference>
<dbReference type="PANTHER" id="PTHR11994">
    <property type="entry name" value="60S RIBOSOMAL PROTEIN L11-RELATED"/>
    <property type="match status" value="1"/>
</dbReference>
<dbReference type="Pfam" id="PF00281">
    <property type="entry name" value="Ribosomal_L5"/>
    <property type="match status" value="1"/>
</dbReference>
<dbReference type="Pfam" id="PF00673">
    <property type="entry name" value="Ribosomal_L5_C"/>
    <property type="match status" value="1"/>
</dbReference>
<dbReference type="PIRSF" id="PIRSF002161">
    <property type="entry name" value="Ribosomal_L5"/>
    <property type="match status" value="1"/>
</dbReference>
<dbReference type="SUPFAM" id="SSF55282">
    <property type="entry name" value="RL5-like"/>
    <property type="match status" value="1"/>
</dbReference>
<dbReference type="PROSITE" id="PS00358">
    <property type="entry name" value="RIBOSOMAL_L5"/>
    <property type="match status" value="1"/>
</dbReference>
<keyword id="KW-1185">Reference proteome</keyword>
<keyword id="KW-0687">Ribonucleoprotein</keyword>
<keyword id="KW-0689">Ribosomal protein</keyword>
<keyword id="KW-0694">RNA-binding</keyword>
<keyword id="KW-0699">rRNA-binding</keyword>
<keyword id="KW-0820">tRNA-binding</keyword>
<reference key="1">
    <citation type="submission" date="2005-03" db="EMBL/GenBank/DDBJ databases">
        <title>Brevibacillus brevis strain 47, complete genome.</title>
        <authorList>
            <person name="Hosoyama A."/>
            <person name="Yamada R."/>
            <person name="Hongo Y."/>
            <person name="Terui Y."/>
            <person name="Ankai A."/>
            <person name="Masuyama W."/>
            <person name="Sekiguchi M."/>
            <person name="Takeda T."/>
            <person name="Asano K."/>
            <person name="Ohji S."/>
            <person name="Ichikawa N."/>
            <person name="Narita S."/>
            <person name="Aoki N."/>
            <person name="Miura H."/>
            <person name="Matsushita S."/>
            <person name="Sekigawa T."/>
            <person name="Yamagata H."/>
            <person name="Yoshikawa H."/>
            <person name="Udaka S."/>
            <person name="Tanikawa S."/>
            <person name="Fujita N."/>
        </authorList>
    </citation>
    <scope>NUCLEOTIDE SEQUENCE [LARGE SCALE GENOMIC DNA]</scope>
    <source>
        <strain>47 / JCM 6285 / NBRC 100599</strain>
    </source>
</reference>
<proteinExistence type="inferred from homology"/>
<protein>
    <recommendedName>
        <fullName evidence="1">Large ribosomal subunit protein uL5</fullName>
    </recommendedName>
    <alternativeName>
        <fullName evidence="2">50S ribosomal protein L5</fullName>
    </alternativeName>
</protein>
<accession>C0ZIJ2</accession>
<comment type="function">
    <text evidence="1">This is one of the proteins that bind and probably mediate the attachment of the 5S RNA into the large ribosomal subunit, where it forms part of the central protuberance. In the 70S ribosome it contacts protein S13 of the 30S subunit (bridge B1b), connecting the 2 subunits; this bridge is implicated in subunit movement. Contacts the P site tRNA; the 5S rRNA and some of its associated proteins might help stabilize positioning of ribosome-bound tRNAs.</text>
</comment>
<comment type="subunit">
    <text evidence="1">Part of the 50S ribosomal subunit; part of the 5S rRNA/L5/L18/L25 subcomplex. Contacts the 5S rRNA and the P site tRNA. Forms a bridge to the 30S subunit in the 70S ribosome.</text>
</comment>
<comment type="similarity">
    <text evidence="1">Belongs to the universal ribosomal protein uL5 family.</text>
</comment>
<feature type="chain" id="PRO_1000166115" description="Large ribosomal subunit protein uL5">
    <location>
        <begin position="1"/>
        <end position="180"/>
    </location>
</feature>
<sequence length="180" mass="20218">MATRLKEKYTSEIVPSLMSKFNYTSIMQVPKVEKIIINMGVGEAVANAKSLDTAIEDLQIIAGQKPVVTKAKKSIAGFKLREGMPIGAKVTLRGERMYHFLDKLMNVSLPRVRDFRGISSKAFDGRGNYTLGLKEQLIFPEIEYDKIDKVRGMDIVVVTSAKTDEEARELLTQMGMPFRK</sequence>
<name>RL5_BREBN</name>
<gene>
    <name evidence="1" type="primary">rplE</name>
    <name type="ordered locus">BBR47_02330</name>
</gene>